<name>RS8_PERMH</name>
<accession>C0QQN7</accession>
<dbReference type="EMBL" id="CP001230">
    <property type="protein sequence ID" value="ACO04546.1"/>
    <property type="molecule type" value="Genomic_DNA"/>
</dbReference>
<dbReference type="RefSeq" id="WP_012676783.1">
    <property type="nucleotide sequence ID" value="NC_012440.1"/>
</dbReference>
<dbReference type="SMR" id="C0QQN7"/>
<dbReference type="STRING" id="123214.PERMA_1210"/>
<dbReference type="PaxDb" id="123214-PERMA_1210"/>
<dbReference type="KEGG" id="pmx:PERMA_1210"/>
<dbReference type="eggNOG" id="COG0096">
    <property type="taxonomic scope" value="Bacteria"/>
</dbReference>
<dbReference type="HOGENOM" id="CLU_098428_0_2_0"/>
<dbReference type="OrthoDB" id="9802617at2"/>
<dbReference type="Proteomes" id="UP000001366">
    <property type="component" value="Chromosome"/>
</dbReference>
<dbReference type="GO" id="GO:1990904">
    <property type="term" value="C:ribonucleoprotein complex"/>
    <property type="evidence" value="ECO:0007669"/>
    <property type="project" value="UniProtKB-KW"/>
</dbReference>
<dbReference type="GO" id="GO:0005840">
    <property type="term" value="C:ribosome"/>
    <property type="evidence" value="ECO:0007669"/>
    <property type="project" value="UniProtKB-KW"/>
</dbReference>
<dbReference type="GO" id="GO:0019843">
    <property type="term" value="F:rRNA binding"/>
    <property type="evidence" value="ECO:0007669"/>
    <property type="project" value="UniProtKB-UniRule"/>
</dbReference>
<dbReference type="GO" id="GO:0003735">
    <property type="term" value="F:structural constituent of ribosome"/>
    <property type="evidence" value="ECO:0007669"/>
    <property type="project" value="InterPro"/>
</dbReference>
<dbReference type="GO" id="GO:0006412">
    <property type="term" value="P:translation"/>
    <property type="evidence" value="ECO:0007669"/>
    <property type="project" value="UniProtKB-UniRule"/>
</dbReference>
<dbReference type="FunFam" id="3.30.1370.30:FF:000002">
    <property type="entry name" value="30S ribosomal protein S8"/>
    <property type="match status" value="1"/>
</dbReference>
<dbReference type="FunFam" id="3.30.1490.10:FF:000001">
    <property type="entry name" value="30S ribosomal protein S8"/>
    <property type="match status" value="1"/>
</dbReference>
<dbReference type="Gene3D" id="3.30.1370.30">
    <property type="match status" value="1"/>
</dbReference>
<dbReference type="Gene3D" id="3.30.1490.10">
    <property type="match status" value="1"/>
</dbReference>
<dbReference type="HAMAP" id="MF_01302_B">
    <property type="entry name" value="Ribosomal_uS8_B"/>
    <property type="match status" value="1"/>
</dbReference>
<dbReference type="InterPro" id="IPR000630">
    <property type="entry name" value="Ribosomal_uS8"/>
</dbReference>
<dbReference type="InterPro" id="IPR047863">
    <property type="entry name" value="Ribosomal_uS8_CS"/>
</dbReference>
<dbReference type="InterPro" id="IPR035987">
    <property type="entry name" value="Ribosomal_uS8_sf"/>
</dbReference>
<dbReference type="NCBIfam" id="NF001109">
    <property type="entry name" value="PRK00136.1"/>
    <property type="match status" value="1"/>
</dbReference>
<dbReference type="PANTHER" id="PTHR11758">
    <property type="entry name" value="40S RIBOSOMAL PROTEIN S15A"/>
    <property type="match status" value="1"/>
</dbReference>
<dbReference type="Pfam" id="PF00410">
    <property type="entry name" value="Ribosomal_S8"/>
    <property type="match status" value="1"/>
</dbReference>
<dbReference type="SUPFAM" id="SSF56047">
    <property type="entry name" value="Ribosomal protein S8"/>
    <property type="match status" value="1"/>
</dbReference>
<dbReference type="PROSITE" id="PS00053">
    <property type="entry name" value="RIBOSOMAL_S8"/>
    <property type="match status" value="1"/>
</dbReference>
<reference key="1">
    <citation type="journal article" date="2009" name="J. Bacteriol.">
        <title>Complete and draft genome sequences of six members of the Aquificales.</title>
        <authorList>
            <person name="Reysenbach A.-L."/>
            <person name="Hamamura N."/>
            <person name="Podar M."/>
            <person name="Griffiths E."/>
            <person name="Ferreira S."/>
            <person name="Hochstein R."/>
            <person name="Heidelberg J."/>
            <person name="Johnson J."/>
            <person name="Mead D."/>
            <person name="Pohorille A."/>
            <person name="Sarmiento M."/>
            <person name="Schweighofer K."/>
            <person name="Seshadri R."/>
            <person name="Voytek M.A."/>
        </authorList>
    </citation>
    <scope>NUCLEOTIDE SEQUENCE [LARGE SCALE GENOMIC DNA]</scope>
    <source>
        <strain>DSM 14350 / EX-H1</strain>
    </source>
</reference>
<feature type="chain" id="PRO_1000165344" description="Small ribosomal subunit protein uS8">
    <location>
        <begin position="1"/>
        <end position="136"/>
    </location>
</feature>
<evidence type="ECO:0000255" key="1">
    <source>
        <dbReference type="HAMAP-Rule" id="MF_01302"/>
    </source>
</evidence>
<evidence type="ECO:0000305" key="2"/>
<sequence>MITDPIADMLARIKNAQAARKSEVYIPHSKIKEKIAQILKKEGYIEDYTISEENKKGNQGTLIIKIKYLDNRNTKPAISGLRRVSKPGLRKYVGADEIPYVRKGLGIAILSTNKGILTDAEARKEKVGGEVLCYVW</sequence>
<proteinExistence type="inferred from homology"/>
<gene>
    <name evidence="1" type="primary">rpsH</name>
    <name type="ordered locus">PERMA_1210</name>
</gene>
<organism>
    <name type="scientific">Persephonella marina (strain DSM 14350 / EX-H1)</name>
    <dbReference type="NCBI Taxonomy" id="123214"/>
    <lineage>
        <taxon>Bacteria</taxon>
        <taxon>Pseudomonadati</taxon>
        <taxon>Aquificota</taxon>
        <taxon>Aquificia</taxon>
        <taxon>Aquificales</taxon>
        <taxon>Hydrogenothermaceae</taxon>
        <taxon>Persephonella</taxon>
    </lineage>
</organism>
<protein>
    <recommendedName>
        <fullName evidence="1">Small ribosomal subunit protein uS8</fullName>
    </recommendedName>
    <alternativeName>
        <fullName evidence="2">30S ribosomal protein S8</fullName>
    </alternativeName>
</protein>
<comment type="function">
    <text evidence="1">One of the primary rRNA binding proteins, it binds directly to 16S rRNA central domain where it helps coordinate assembly of the platform of the 30S subunit.</text>
</comment>
<comment type="subunit">
    <text evidence="1">Part of the 30S ribosomal subunit. Contacts proteins S5 and S12.</text>
</comment>
<comment type="similarity">
    <text evidence="1">Belongs to the universal ribosomal protein uS8 family.</text>
</comment>
<keyword id="KW-1185">Reference proteome</keyword>
<keyword id="KW-0687">Ribonucleoprotein</keyword>
<keyword id="KW-0689">Ribosomal protein</keyword>
<keyword id="KW-0694">RNA-binding</keyword>
<keyword id="KW-0699">rRNA-binding</keyword>